<geneLocation type="chloroplast"/>
<organism>
    <name type="scientific">Oryza sativa subsp. indica</name>
    <name type="common">Rice</name>
    <dbReference type="NCBI Taxonomy" id="39946"/>
    <lineage>
        <taxon>Eukaryota</taxon>
        <taxon>Viridiplantae</taxon>
        <taxon>Streptophyta</taxon>
        <taxon>Embryophyta</taxon>
        <taxon>Tracheophyta</taxon>
        <taxon>Spermatophyta</taxon>
        <taxon>Magnoliopsida</taxon>
        <taxon>Liliopsida</taxon>
        <taxon>Poales</taxon>
        <taxon>Poaceae</taxon>
        <taxon>BOP clade</taxon>
        <taxon>Oryzoideae</taxon>
        <taxon>Oryzeae</taxon>
        <taxon>Oryzinae</taxon>
        <taxon>Oryza</taxon>
        <taxon>Oryza sativa</taxon>
    </lineage>
</organism>
<sequence length="93" mass="10695">MTRKKTNPFVAHHLLAKIEKVNMKEEKETIVTWSRASSILPAMVGHTIAIHNGKEHIPIYITNPMVGRKLGEFVPTRHFTSYESARKDTKSRR</sequence>
<accession>P0C479</accession>
<keyword id="KW-0150">Chloroplast</keyword>
<keyword id="KW-0934">Plastid</keyword>
<keyword id="KW-1185">Reference proteome</keyword>
<keyword id="KW-0687">Ribonucleoprotein</keyword>
<keyword id="KW-0689">Ribosomal protein</keyword>
<keyword id="KW-0694">RNA-binding</keyword>
<keyword id="KW-0699">rRNA-binding</keyword>
<protein>
    <recommendedName>
        <fullName evidence="2">Small ribosomal subunit protein uS19c</fullName>
    </recommendedName>
    <alternativeName>
        <fullName>30S ribosomal protein S19, chloroplastic</fullName>
    </alternativeName>
</protein>
<proteinExistence type="inferred from homology"/>
<reference key="1">
    <citation type="journal article" date="2004" name="Plant Physiol.">
        <title>A comparison of rice chloroplast genomes.</title>
        <authorList>
            <person name="Tang J."/>
            <person name="Xia H."/>
            <person name="Cao M."/>
            <person name="Zhang X."/>
            <person name="Zeng W."/>
            <person name="Hu S."/>
            <person name="Tong W."/>
            <person name="Wang J."/>
            <person name="Wang J."/>
            <person name="Yu J."/>
            <person name="Yang H."/>
            <person name="Zhu L."/>
        </authorList>
    </citation>
    <scope>NUCLEOTIDE SEQUENCE [LARGE SCALE GENOMIC DNA]</scope>
    <source>
        <strain>cv. 93-11</strain>
    </source>
</reference>
<evidence type="ECO:0000250" key="1"/>
<evidence type="ECO:0000305" key="2"/>
<name>RR19_ORYSI</name>
<comment type="function">
    <text evidence="1">Protein S19 forms a complex with S13 that binds strongly to the 16S ribosomal RNA.</text>
</comment>
<comment type="subcellular location">
    <subcellularLocation>
        <location>Plastid</location>
        <location>Chloroplast</location>
    </subcellularLocation>
</comment>
<comment type="similarity">
    <text evidence="2">Belongs to the universal ribosomal protein uS19 family.</text>
</comment>
<feature type="initiator methionine" description="Removed" evidence="1">
    <location>
        <position position="1"/>
    </location>
</feature>
<feature type="chain" id="PRO_0000290078" description="Small ribosomal subunit protein uS19c">
    <location>
        <begin position="2"/>
        <end position="93"/>
    </location>
</feature>
<dbReference type="EMBL" id="AY522329">
    <property type="status" value="NOT_ANNOTATED_CDS"/>
    <property type="molecule type" value="Genomic_DNA"/>
</dbReference>
<dbReference type="RefSeq" id="YP_009161404.1">
    <property type="nucleotide sequence ID" value="NC_027678.1"/>
</dbReference>
<dbReference type="RefSeq" id="YP_009161436.1">
    <property type="nucleotide sequence ID" value="NC_027678.1"/>
</dbReference>
<dbReference type="SMR" id="P0C479"/>
<dbReference type="STRING" id="39946.P0C479"/>
<dbReference type="Proteomes" id="UP000007015">
    <property type="component" value="Chloroplast"/>
</dbReference>
<dbReference type="GO" id="GO:0009507">
    <property type="term" value="C:chloroplast"/>
    <property type="evidence" value="ECO:0007669"/>
    <property type="project" value="UniProtKB-SubCell"/>
</dbReference>
<dbReference type="GO" id="GO:0005763">
    <property type="term" value="C:mitochondrial small ribosomal subunit"/>
    <property type="evidence" value="ECO:0007669"/>
    <property type="project" value="TreeGrafter"/>
</dbReference>
<dbReference type="GO" id="GO:0009536">
    <property type="term" value="C:plastid"/>
    <property type="evidence" value="ECO:0000305"/>
    <property type="project" value="Gramene"/>
</dbReference>
<dbReference type="GO" id="GO:0019843">
    <property type="term" value="F:rRNA binding"/>
    <property type="evidence" value="ECO:0007669"/>
    <property type="project" value="UniProtKB-UniRule"/>
</dbReference>
<dbReference type="GO" id="GO:0003735">
    <property type="term" value="F:structural constituent of ribosome"/>
    <property type="evidence" value="ECO:0007669"/>
    <property type="project" value="InterPro"/>
</dbReference>
<dbReference type="GO" id="GO:0000028">
    <property type="term" value="P:ribosomal small subunit assembly"/>
    <property type="evidence" value="ECO:0007669"/>
    <property type="project" value="TreeGrafter"/>
</dbReference>
<dbReference type="GO" id="GO:0006412">
    <property type="term" value="P:translation"/>
    <property type="evidence" value="ECO:0007669"/>
    <property type="project" value="UniProtKB-UniRule"/>
</dbReference>
<dbReference type="FunFam" id="3.30.860.10:FF:000001">
    <property type="entry name" value="30S ribosomal protein S19"/>
    <property type="match status" value="1"/>
</dbReference>
<dbReference type="Gene3D" id="3.30.860.10">
    <property type="entry name" value="30s Ribosomal Protein S19, Chain A"/>
    <property type="match status" value="1"/>
</dbReference>
<dbReference type="HAMAP" id="MF_00531">
    <property type="entry name" value="Ribosomal_uS19"/>
    <property type="match status" value="1"/>
</dbReference>
<dbReference type="InterPro" id="IPR002222">
    <property type="entry name" value="Ribosomal_uS19"/>
</dbReference>
<dbReference type="InterPro" id="IPR005732">
    <property type="entry name" value="Ribosomal_uS19_bac-type"/>
</dbReference>
<dbReference type="InterPro" id="IPR020934">
    <property type="entry name" value="Ribosomal_uS19_CS"/>
</dbReference>
<dbReference type="InterPro" id="IPR023575">
    <property type="entry name" value="Ribosomal_uS19_SF"/>
</dbReference>
<dbReference type="NCBIfam" id="TIGR01050">
    <property type="entry name" value="rpsS_bact"/>
    <property type="match status" value="1"/>
</dbReference>
<dbReference type="PANTHER" id="PTHR11880">
    <property type="entry name" value="RIBOSOMAL PROTEIN S19P FAMILY MEMBER"/>
    <property type="match status" value="1"/>
</dbReference>
<dbReference type="PANTHER" id="PTHR11880:SF8">
    <property type="entry name" value="SMALL RIBOSOMAL SUBUNIT PROTEIN US19M"/>
    <property type="match status" value="1"/>
</dbReference>
<dbReference type="Pfam" id="PF00203">
    <property type="entry name" value="Ribosomal_S19"/>
    <property type="match status" value="1"/>
</dbReference>
<dbReference type="PIRSF" id="PIRSF002144">
    <property type="entry name" value="Ribosomal_S19"/>
    <property type="match status" value="1"/>
</dbReference>
<dbReference type="PRINTS" id="PR00975">
    <property type="entry name" value="RIBOSOMALS19"/>
</dbReference>
<dbReference type="SUPFAM" id="SSF54570">
    <property type="entry name" value="Ribosomal protein S19"/>
    <property type="match status" value="1"/>
</dbReference>
<dbReference type="PROSITE" id="PS00323">
    <property type="entry name" value="RIBOSOMAL_S19"/>
    <property type="match status" value="1"/>
</dbReference>
<gene>
    <name type="primary">rps19-A</name>
    <name type="ORF">9311116</name>
</gene>
<gene>
    <name type="primary">rps19-B</name>
</gene>